<accession>A2BP55</accession>
<proteinExistence type="inferred from homology"/>
<comment type="function">
    <text evidence="1">Catalyzes the isomerization between 2-isopropylmalate and 3-isopropylmalate, via the formation of 2-isopropylmaleate.</text>
</comment>
<comment type="catalytic activity">
    <reaction evidence="1">
        <text>(2R,3S)-3-isopropylmalate = (2S)-2-isopropylmalate</text>
        <dbReference type="Rhea" id="RHEA:32287"/>
        <dbReference type="ChEBI" id="CHEBI:1178"/>
        <dbReference type="ChEBI" id="CHEBI:35121"/>
        <dbReference type="EC" id="4.2.1.33"/>
    </reaction>
</comment>
<comment type="cofactor">
    <cofactor evidence="1">
        <name>[4Fe-4S] cluster</name>
        <dbReference type="ChEBI" id="CHEBI:49883"/>
    </cofactor>
    <text evidence="1">Binds 1 [4Fe-4S] cluster per subunit.</text>
</comment>
<comment type="pathway">
    <text evidence="1">Amino-acid biosynthesis; L-leucine biosynthesis; L-leucine from 3-methyl-2-oxobutanoate: step 2/4.</text>
</comment>
<comment type="subunit">
    <text evidence="1">Heterodimer of LeuC and LeuD.</text>
</comment>
<comment type="similarity">
    <text evidence="1">Belongs to the aconitase/IPM isomerase family. LeuC type 1 subfamily.</text>
</comment>
<protein>
    <recommendedName>
        <fullName evidence="1">3-isopropylmalate dehydratase large subunit</fullName>
        <ecNumber evidence="1">4.2.1.33</ecNumber>
    </recommendedName>
    <alternativeName>
        <fullName evidence="1">Alpha-IPM isomerase</fullName>
        <shortName evidence="1">IPMI</shortName>
    </alternativeName>
    <alternativeName>
        <fullName evidence="1">Isopropylmalate isomerase</fullName>
    </alternativeName>
</protein>
<dbReference type="EC" id="4.2.1.33" evidence="1"/>
<dbReference type="EMBL" id="CP000551">
    <property type="protein sequence ID" value="ABM69566.1"/>
    <property type="molecule type" value="Genomic_DNA"/>
</dbReference>
<dbReference type="RefSeq" id="WP_011817748.1">
    <property type="nucleotide sequence ID" value="NC_008816.1"/>
</dbReference>
<dbReference type="SMR" id="A2BP55"/>
<dbReference type="STRING" id="146891.A9601_02781"/>
<dbReference type="KEGG" id="pmb:A9601_02781"/>
<dbReference type="eggNOG" id="COG0065">
    <property type="taxonomic scope" value="Bacteria"/>
</dbReference>
<dbReference type="HOGENOM" id="CLU_006714_3_4_3"/>
<dbReference type="OrthoDB" id="9802769at2"/>
<dbReference type="UniPathway" id="UPA00048">
    <property type="reaction ID" value="UER00071"/>
</dbReference>
<dbReference type="Proteomes" id="UP000002590">
    <property type="component" value="Chromosome"/>
</dbReference>
<dbReference type="GO" id="GO:0003861">
    <property type="term" value="F:3-isopropylmalate dehydratase activity"/>
    <property type="evidence" value="ECO:0007669"/>
    <property type="project" value="UniProtKB-UniRule"/>
</dbReference>
<dbReference type="GO" id="GO:0051539">
    <property type="term" value="F:4 iron, 4 sulfur cluster binding"/>
    <property type="evidence" value="ECO:0007669"/>
    <property type="project" value="UniProtKB-KW"/>
</dbReference>
<dbReference type="GO" id="GO:0046872">
    <property type="term" value="F:metal ion binding"/>
    <property type="evidence" value="ECO:0007669"/>
    <property type="project" value="UniProtKB-KW"/>
</dbReference>
<dbReference type="GO" id="GO:0009098">
    <property type="term" value="P:L-leucine biosynthetic process"/>
    <property type="evidence" value="ECO:0007669"/>
    <property type="project" value="UniProtKB-UniRule"/>
</dbReference>
<dbReference type="CDD" id="cd01583">
    <property type="entry name" value="IPMI"/>
    <property type="match status" value="1"/>
</dbReference>
<dbReference type="Gene3D" id="3.30.499.10">
    <property type="entry name" value="Aconitase, domain 3"/>
    <property type="match status" value="2"/>
</dbReference>
<dbReference type="HAMAP" id="MF_01026">
    <property type="entry name" value="LeuC_type1"/>
    <property type="match status" value="1"/>
</dbReference>
<dbReference type="InterPro" id="IPR004430">
    <property type="entry name" value="3-IsopropMal_deHydase_lsu"/>
</dbReference>
<dbReference type="InterPro" id="IPR015931">
    <property type="entry name" value="Acnase/IPM_dHydase_lsu_aba_1/3"/>
</dbReference>
<dbReference type="InterPro" id="IPR001030">
    <property type="entry name" value="Acoase/IPM_deHydtase_lsu_aba"/>
</dbReference>
<dbReference type="InterPro" id="IPR018136">
    <property type="entry name" value="Aconitase_4Fe-4S_BS"/>
</dbReference>
<dbReference type="InterPro" id="IPR036008">
    <property type="entry name" value="Aconitase_4Fe-4S_dom"/>
</dbReference>
<dbReference type="InterPro" id="IPR050067">
    <property type="entry name" value="IPM_dehydratase_rel_enz"/>
</dbReference>
<dbReference type="InterPro" id="IPR033941">
    <property type="entry name" value="IPMI_cat"/>
</dbReference>
<dbReference type="NCBIfam" id="TIGR00170">
    <property type="entry name" value="leuC"/>
    <property type="match status" value="1"/>
</dbReference>
<dbReference type="NCBIfam" id="NF004016">
    <property type="entry name" value="PRK05478.1"/>
    <property type="match status" value="1"/>
</dbReference>
<dbReference type="NCBIfam" id="NF009116">
    <property type="entry name" value="PRK12466.1"/>
    <property type="match status" value="1"/>
</dbReference>
<dbReference type="PANTHER" id="PTHR43822:SF9">
    <property type="entry name" value="3-ISOPROPYLMALATE DEHYDRATASE"/>
    <property type="match status" value="1"/>
</dbReference>
<dbReference type="PANTHER" id="PTHR43822">
    <property type="entry name" value="HOMOACONITASE, MITOCHONDRIAL-RELATED"/>
    <property type="match status" value="1"/>
</dbReference>
<dbReference type="Pfam" id="PF00330">
    <property type="entry name" value="Aconitase"/>
    <property type="match status" value="1"/>
</dbReference>
<dbReference type="PRINTS" id="PR00415">
    <property type="entry name" value="ACONITASE"/>
</dbReference>
<dbReference type="SUPFAM" id="SSF53732">
    <property type="entry name" value="Aconitase iron-sulfur domain"/>
    <property type="match status" value="1"/>
</dbReference>
<dbReference type="PROSITE" id="PS00450">
    <property type="entry name" value="ACONITASE_1"/>
    <property type="match status" value="1"/>
</dbReference>
<dbReference type="PROSITE" id="PS01244">
    <property type="entry name" value="ACONITASE_2"/>
    <property type="match status" value="1"/>
</dbReference>
<feature type="chain" id="PRO_1000063588" description="3-isopropylmalate dehydratase large subunit">
    <location>
        <begin position="1"/>
        <end position="468"/>
    </location>
</feature>
<feature type="binding site" evidence="1">
    <location>
        <position position="347"/>
    </location>
    <ligand>
        <name>[4Fe-4S] cluster</name>
        <dbReference type="ChEBI" id="CHEBI:49883"/>
    </ligand>
</feature>
<feature type="binding site" evidence="1">
    <location>
        <position position="407"/>
    </location>
    <ligand>
        <name>[4Fe-4S] cluster</name>
        <dbReference type="ChEBI" id="CHEBI:49883"/>
    </ligand>
</feature>
<feature type="binding site" evidence="1">
    <location>
        <position position="410"/>
    </location>
    <ligand>
        <name>[4Fe-4S] cluster</name>
        <dbReference type="ChEBI" id="CHEBI:49883"/>
    </ligand>
</feature>
<keyword id="KW-0004">4Fe-4S</keyword>
<keyword id="KW-0028">Amino-acid biosynthesis</keyword>
<keyword id="KW-0100">Branched-chain amino acid biosynthesis</keyword>
<keyword id="KW-0408">Iron</keyword>
<keyword id="KW-0411">Iron-sulfur</keyword>
<keyword id="KW-0432">Leucine biosynthesis</keyword>
<keyword id="KW-0456">Lyase</keyword>
<keyword id="KW-0479">Metal-binding</keyword>
<reference key="1">
    <citation type="journal article" date="2007" name="PLoS Genet.">
        <title>Patterns and implications of gene gain and loss in the evolution of Prochlorococcus.</title>
        <authorList>
            <person name="Kettler G.C."/>
            <person name="Martiny A.C."/>
            <person name="Huang K."/>
            <person name="Zucker J."/>
            <person name="Coleman M.L."/>
            <person name="Rodrigue S."/>
            <person name="Chen F."/>
            <person name="Lapidus A."/>
            <person name="Ferriera S."/>
            <person name="Johnson J."/>
            <person name="Steglich C."/>
            <person name="Church G.M."/>
            <person name="Richardson P."/>
            <person name="Chisholm S.W."/>
        </authorList>
    </citation>
    <scope>NUCLEOTIDE SEQUENCE [LARGE SCALE GENOMIC DNA]</scope>
    <source>
        <strain>AS9601</strain>
    </source>
</reference>
<gene>
    <name evidence="1" type="primary">leuC</name>
    <name type="ordered locus">A9601_02781</name>
</gene>
<evidence type="ECO:0000255" key="1">
    <source>
        <dbReference type="HAMAP-Rule" id="MF_01026"/>
    </source>
</evidence>
<organism>
    <name type="scientific">Prochlorococcus marinus (strain AS9601)</name>
    <dbReference type="NCBI Taxonomy" id="146891"/>
    <lineage>
        <taxon>Bacteria</taxon>
        <taxon>Bacillati</taxon>
        <taxon>Cyanobacteriota</taxon>
        <taxon>Cyanophyceae</taxon>
        <taxon>Synechococcales</taxon>
        <taxon>Prochlorococcaceae</taxon>
        <taxon>Prochlorococcus</taxon>
    </lineage>
</organism>
<sequence>MSQDTLFDKVWDLHKVSRLPGGSDQILIGLHLIHEVTSPQAFGALKDKNLKVKFPDRTVATVDHIVPTDNQSRPFKDNLAEQMIETLEKNCLEHKIRFFNIGSGNQGIVHVVAPELGLTQPGMTIACGDSHTSTHGAFGSIAFGIGTSQVRDVLATQTIAMNKLKVRQIWCDNKLSKGVFAKDLVLHIINELGVKAGVGFAYEFAGPAIDELSMEERMTICNMSIEGGARCGYINPDEKTFSYIKDKLCAPKNEYWDKALTWWKSLKSDENSIYDDVIKLDASKVEPTVTWGITPGQSISINQQIPLLDDLSPNDKLVAKEAYEYMSFKPGQYIKDTPVDVCFIGSCTNGRISDLRVAARVLKNKKVSKNVKAFVVPGSEKVATEAKQEGLDEIFKDSGFQWREPGCSMCLAMNSDKLIGNQVSASSSNRNFKGRQGSPSGRTLLMSPAMVAAAAINGKVSDVREFIN</sequence>
<name>LEUC_PROMS</name>